<sequence length="71" mass="7803">IRCFITPDVTSQICADGHVCYTKTWCDAWCTSRGKRVDLGCAATCPTVKTGVDIKCCSTDNCNPFPTRNRP</sequence>
<organism>
    <name type="scientific">Naja melanoleuca</name>
    <name type="common">Forest cobra</name>
    <name type="synonym">Black-lipped cobra</name>
    <dbReference type="NCBI Taxonomy" id="8643"/>
    <lineage>
        <taxon>Eukaryota</taxon>
        <taxon>Metazoa</taxon>
        <taxon>Chordata</taxon>
        <taxon>Craniata</taxon>
        <taxon>Vertebrata</taxon>
        <taxon>Euteleostomi</taxon>
        <taxon>Lepidosauria</taxon>
        <taxon>Squamata</taxon>
        <taxon>Bifurcata</taxon>
        <taxon>Unidentata</taxon>
        <taxon>Episquamata</taxon>
        <taxon>Toxicofera</taxon>
        <taxon>Serpentes</taxon>
        <taxon>Colubroidea</taxon>
        <taxon>Elapidae</taxon>
        <taxon>Elapinae</taxon>
        <taxon>Naja</taxon>
    </lineage>
</organism>
<reference key="1">
    <citation type="journal article" date="2021" name="Toxins">
        <title>Novel three-finger neurotoxins from Naja melanoleuca cobra venom interact with GABAA and nicotinic acetylcholine receptors.</title>
        <authorList>
            <person name="Son L."/>
            <person name="Kryukova E."/>
            <person name="Ziganshin R."/>
            <person name="Andreeva T."/>
            <person name="Kudryavtsev D."/>
            <person name="Kasheverov I."/>
            <person name="Tsetlin V."/>
            <person name="Utkin Y."/>
        </authorList>
    </citation>
    <scope>PROTEIN SEQUENCE</scope>
    <scope>FUNCTION</scope>
    <scope>SUBCELLULAR LOCATION</scope>
    <scope>MASS SPECTROMETRY</scope>
    <scope>3D-STRUCTURE MODELING</scope>
    <source>
        <tissue>Venom</tissue>
    </source>
</reference>
<dbReference type="SMR" id="P0DQQ2"/>
<dbReference type="GO" id="GO:0005576">
    <property type="term" value="C:extracellular region"/>
    <property type="evidence" value="ECO:0007669"/>
    <property type="project" value="UniProtKB-SubCell"/>
</dbReference>
<dbReference type="GO" id="GO:0030550">
    <property type="term" value="F:acetylcholine receptor inhibitor activity"/>
    <property type="evidence" value="ECO:0007669"/>
    <property type="project" value="UniProtKB-KW"/>
</dbReference>
<dbReference type="GO" id="GO:0099106">
    <property type="term" value="F:ion channel regulator activity"/>
    <property type="evidence" value="ECO:0007669"/>
    <property type="project" value="UniProtKB-KW"/>
</dbReference>
<dbReference type="GO" id="GO:0090729">
    <property type="term" value="F:toxin activity"/>
    <property type="evidence" value="ECO:0007669"/>
    <property type="project" value="UniProtKB-KW"/>
</dbReference>
<dbReference type="CDD" id="cd00206">
    <property type="entry name" value="TFP_snake_toxin"/>
    <property type="match status" value="1"/>
</dbReference>
<dbReference type="Gene3D" id="2.10.60.10">
    <property type="entry name" value="CD59"/>
    <property type="match status" value="1"/>
</dbReference>
<dbReference type="InterPro" id="IPR003571">
    <property type="entry name" value="Snake_3FTx"/>
</dbReference>
<dbReference type="InterPro" id="IPR045860">
    <property type="entry name" value="Snake_toxin-like_sf"/>
</dbReference>
<dbReference type="InterPro" id="IPR018354">
    <property type="entry name" value="Snake_toxin_con_site"/>
</dbReference>
<dbReference type="InterPro" id="IPR054131">
    <property type="entry name" value="Toxin_cobra-type"/>
</dbReference>
<dbReference type="Pfam" id="PF21947">
    <property type="entry name" value="Toxin_cobra-type"/>
    <property type="match status" value="1"/>
</dbReference>
<dbReference type="SUPFAM" id="SSF57302">
    <property type="entry name" value="Snake toxin-like"/>
    <property type="match status" value="1"/>
</dbReference>
<dbReference type="PROSITE" id="PS00272">
    <property type="entry name" value="SNAKE_TOXIN"/>
    <property type="match status" value="1"/>
</dbReference>
<keyword id="KW-0008">Acetylcholine receptor inhibiting toxin</keyword>
<keyword id="KW-0903">Direct protein sequencing</keyword>
<keyword id="KW-1015">Disulfide bond</keyword>
<keyword id="KW-0872">Ion channel impairing toxin</keyword>
<keyword id="KW-0528">Neurotoxin</keyword>
<keyword id="KW-0629">Postsynaptic neurotoxin</keyword>
<keyword id="KW-0964">Secreted</keyword>
<keyword id="KW-0800">Toxin</keyword>
<protein>
    <recommendedName>
        <fullName evidence="3">Long neurotoxin Tx-NM3-1</fullName>
    </recommendedName>
</protein>
<name>3L24_NAJME</name>
<accession>P0DQQ2</accession>
<comment type="function">
    <text evidence="2">Binds with high affinity to muscular (alpha-1-beta-1-gamma-delta/CHRNA1-CHRNB1-CHRNG-CHRND) and neuronal (alpha-7/CHRNA7) nicotinic acetylcholine receptor (nAChR) and inhibits acetylcholine from binding to the receptor, thereby impairing neuromuscular and neuronal transmission (PubMed:33672715). Ranges of nAChR inhibition are in nanomolar (competitive binding with alpha-bungarotoxin gives Ki=1.66 nM on muscle nAChR and Ki=4.84 nM on alpha-7) (PubMed:33672715). Also shows moderate inhibition on GABA(A) alpha-1-beta-3-gamma-2 receptor (GABRA1-GABRB3-GABRG2) (IC(50)=0.68 uM), and a lower inhibition on alpha-1-beta-2-gamma-2 (GABRA1-GABRB2-GABRG2) and alpha-3-beta-2-gamma-2 (GABRA3-GABRB2-GABRG2) (PubMed:33672715).</text>
</comment>
<comment type="subcellular location">
    <subcellularLocation>
        <location evidence="2">Secreted</location>
    </subcellularLocation>
</comment>
<comment type="tissue specificity">
    <text evidence="5">Expressed by the venom gland.</text>
</comment>
<comment type="mass spectrometry" mass="7787.58" method="Electrospray" evidence="2"/>
<comment type="similarity">
    <text evidence="4">Belongs to the three-finger toxin family. Long-chain subfamily. Type II alpha-neurotoxin sub-subfamily.</text>
</comment>
<feature type="chain" id="PRO_0000453024" description="Long neurotoxin Tx-NM3-1" evidence="2">
    <location>
        <begin position="1"/>
        <end position="71"/>
    </location>
</feature>
<feature type="disulfide bond" evidence="1">
    <location>
        <begin position="3"/>
        <end position="20"/>
    </location>
</feature>
<feature type="disulfide bond" evidence="1">
    <location>
        <begin position="14"/>
        <end position="41"/>
    </location>
</feature>
<feature type="disulfide bond" evidence="1">
    <location>
        <begin position="26"/>
        <end position="30"/>
    </location>
</feature>
<feature type="disulfide bond" evidence="1">
    <location>
        <begin position="45"/>
        <end position="56"/>
    </location>
</feature>
<feature type="disulfide bond" evidence="1">
    <location>
        <begin position="57"/>
        <end position="62"/>
    </location>
</feature>
<evidence type="ECO:0000250" key="1">
    <source>
        <dbReference type="UniProtKB" id="P25671"/>
    </source>
</evidence>
<evidence type="ECO:0000269" key="2">
    <source>
    </source>
</evidence>
<evidence type="ECO:0000303" key="3">
    <source>
    </source>
</evidence>
<evidence type="ECO:0000305" key="4"/>
<evidence type="ECO:0000305" key="5">
    <source>
    </source>
</evidence>
<proteinExistence type="evidence at protein level"/>